<keyword id="KW-0489">Methyltransferase</keyword>
<keyword id="KW-0949">S-adenosyl-L-methionine</keyword>
<keyword id="KW-0808">Transferase</keyword>
<keyword id="KW-0831">Ubiquinone biosynthesis</keyword>
<dbReference type="EC" id="2.1.1.222" evidence="1"/>
<dbReference type="EC" id="2.1.1.64" evidence="1"/>
<dbReference type="EMBL" id="CP000390">
    <property type="protein sequence ID" value="ABG64374.1"/>
    <property type="molecule type" value="Genomic_DNA"/>
</dbReference>
<dbReference type="SMR" id="Q11E01"/>
<dbReference type="STRING" id="266779.Meso_3002"/>
<dbReference type="KEGG" id="mes:Meso_3002"/>
<dbReference type="eggNOG" id="COG2227">
    <property type="taxonomic scope" value="Bacteria"/>
</dbReference>
<dbReference type="HOGENOM" id="CLU_042432_0_0_5"/>
<dbReference type="OrthoDB" id="9801538at2"/>
<dbReference type="UniPathway" id="UPA00232"/>
<dbReference type="GO" id="GO:0102208">
    <property type="term" value="F:2-polyprenyl-6-hydroxyphenol methylase activity"/>
    <property type="evidence" value="ECO:0007669"/>
    <property type="project" value="UniProtKB-EC"/>
</dbReference>
<dbReference type="GO" id="GO:0061542">
    <property type="term" value="F:3-demethylubiquinol 3-O-methyltransferase activity"/>
    <property type="evidence" value="ECO:0007669"/>
    <property type="project" value="UniProtKB-UniRule"/>
</dbReference>
<dbReference type="GO" id="GO:0010420">
    <property type="term" value="F:polyprenyldihydroxybenzoate methyltransferase activity"/>
    <property type="evidence" value="ECO:0007669"/>
    <property type="project" value="InterPro"/>
</dbReference>
<dbReference type="GO" id="GO:0032259">
    <property type="term" value="P:methylation"/>
    <property type="evidence" value="ECO:0007669"/>
    <property type="project" value="UniProtKB-KW"/>
</dbReference>
<dbReference type="CDD" id="cd02440">
    <property type="entry name" value="AdoMet_MTases"/>
    <property type="match status" value="1"/>
</dbReference>
<dbReference type="Gene3D" id="3.40.50.150">
    <property type="entry name" value="Vaccinia Virus protein VP39"/>
    <property type="match status" value="1"/>
</dbReference>
<dbReference type="HAMAP" id="MF_00472">
    <property type="entry name" value="UbiG"/>
    <property type="match status" value="1"/>
</dbReference>
<dbReference type="InterPro" id="IPR029063">
    <property type="entry name" value="SAM-dependent_MTases_sf"/>
</dbReference>
<dbReference type="InterPro" id="IPR010233">
    <property type="entry name" value="UbiG_MeTrfase"/>
</dbReference>
<dbReference type="NCBIfam" id="TIGR01983">
    <property type="entry name" value="UbiG"/>
    <property type="match status" value="1"/>
</dbReference>
<dbReference type="PANTHER" id="PTHR43464">
    <property type="entry name" value="METHYLTRANSFERASE"/>
    <property type="match status" value="1"/>
</dbReference>
<dbReference type="PANTHER" id="PTHR43464:SF19">
    <property type="entry name" value="UBIQUINONE BIOSYNTHESIS O-METHYLTRANSFERASE, MITOCHONDRIAL"/>
    <property type="match status" value="1"/>
</dbReference>
<dbReference type="Pfam" id="PF13489">
    <property type="entry name" value="Methyltransf_23"/>
    <property type="match status" value="1"/>
</dbReference>
<dbReference type="SUPFAM" id="SSF53335">
    <property type="entry name" value="S-adenosyl-L-methionine-dependent methyltransferases"/>
    <property type="match status" value="1"/>
</dbReference>
<evidence type="ECO:0000255" key="1">
    <source>
        <dbReference type="HAMAP-Rule" id="MF_00472"/>
    </source>
</evidence>
<accession>Q11E01</accession>
<sequence>MPEARRTTIDAGEVERFSALAQEWWNPNGKFRPLHKFNPVRLAYIRDNVAAHFGRDPRAAKPFEGLRILDIGCGGGLLCEPMARLGASVVGADASATNIEVARLHALESGVSIDYRAETAEALADQGEKFDIILNMEVVEHVADIDLFIEKCAEMLKPGGLMFVATINRTLKALGLAIIGAEYVLRWLPRGTHQYGKLVRPDELERALASAGLITKDRTGVVYNPLTDRWNRSRDMDVNYMVLAEKPTAEAMI</sequence>
<reference key="1">
    <citation type="submission" date="2006-06" db="EMBL/GenBank/DDBJ databases">
        <title>Complete sequence of chromosome of Mesorhizobium sp. BNC1.</title>
        <authorList>
            <consortium name="US DOE Joint Genome Institute"/>
            <person name="Copeland A."/>
            <person name="Lucas S."/>
            <person name="Lapidus A."/>
            <person name="Barry K."/>
            <person name="Detter J.C."/>
            <person name="Glavina del Rio T."/>
            <person name="Hammon N."/>
            <person name="Israni S."/>
            <person name="Dalin E."/>
            <person name="Tice H."/>
            <person name="Pitluck S."/>
            <person name="Chertkov O."/>
            <person name="Brettin T."/>
            <person name="Bruce D."/>
            <person name="Han C."/>
            <person name="Tapia R."/>
            <person name="Gilna P."/>
            <person name="Schmutz J."/>
            <person name="Larimer F."/>
            <person name="Land M."/>
            <person name="Hauser L."/>
            <person name="Kyrpides N."/>
            <person name="Mikhailova N."/>
            <person name="Richardson P."/>
        </authorList>
    </citation>
    <scope>NUCLEOTIDE SEQUENCE [LARGE SCALE GENOMIC DNA]</scope>
    <source>
        <strain>BNC1</strain>
    </source>
</reference>
<feature type="chain" id="PRO_1000013904" description="Ubiquinone biosynthesis O-methyltransferase">
    <location>
        <begin position="1"/>
        <end position="253"/>
    </location>
</feature>
<feature type="binding site" evidence="1">
    <location>
        <position position="41"/>
    </location>
    <ligand>
        <name>S-adenosyl-L-methionine</name>
        <dbReference type="ChEBI" id="CHEBI:59789"/>
    </ligand>
</feature>
<feature type="binding site" evidence="1">
    <location>
        <position position="72"/>
    </location>
    <ligand>
        <name>S-adenosyl-L-methionine</name>
        <dbReference type="ChEBI" id="CHEBI:59789"/>
    </ligand>
</feature>
<feature type="binding site" evidence="1">
    <location>
        <position position="93"/>
    </location>
    <ligand>
        <name>S-adenosyl-L-methionine</name>
        <dbReference type="ChEBI" id="CHEBI:59789"/>
    </ligand>
</feature>
<feature type="binding site" evidence="1">
    <location>
        <position position="136"/>
    </location>
    <ligand>
        <name>S-adenosyl-L-methionine</name>
        <dbReference type="ChEBI" id="CHEBI:59789"/>
    </ligand>
</feature>
<proteinExistence type="inferred from homology"/>
<comment type="function">
    <text evidence="1">O-methyltransferase that catalyzes the 2 O-methylation steps in the ubiquinone biosynthetic pathway.</text>
</comment>
<comment type="catalytic activity">
    <reaction evidence="1">
        <text>a 3-demethylubiquinol + S-adenosyl-L-methionine = a ubiquinol + S-adenosyl-L-homocysteine + H(+)</text>
        <dbReference type="Rhea" id="RHEA:44380"/>
        <dbReference type="Rhea" id="RHEA-COMP:9566"/>
        <dbReference type="Rhea" id="RHEA-COMP:10914"/>
        <dbReference type="ChEBI" id="CHEBI:15378"/>
        <dbReference type="ChEBI" id="CHEBI:17976"/>
        <dbReference type="ChEBI" id="CHEBI:57856"/>
        <dbReference type="ChEBI" id="CHEBI:59789"/>
        <dbReference type="ChEBI" id="CHEBI:84422"/>
        <dbReference type="EC" id="2.1.1.64"/>
    </reaction>
</comment>
<comment type="catalytic activity">
    <reaction evidence="1">
        <text>a 3-(all-trans-polyprenyl)benzene-1,2-diol + S-adenosyl-L-methionine = a 2-methoxy-6-(all-trans-polyprenyl)phenol + S-adenosyl-L-homocysteine + H(+)</text>
        <dbReference type="Rhea" id="RHEA:31411"/>
        <dbReference type="Rhea" id="RHEA-COMP:9550"/>
        <dbReference type="Rhea" id="RHEA-COMP:9551"/>
        <dbReference type="ChEBI" id="CHEBI:15378"/>
        <dbReference type="ChEBI" id="CHEBI:57856"/>
        <dbReference type="ChEBI" id="CHEBI:59789"/>
        <dbReference type="ChEBI" id="CHEBI:62729"/>
        <dbReference type="ChEBI" id="CHEBI:62731"/>
        <dbReference type="EC" id="2.1.1.222"/>
    </reaction>
</comment>
<comment type="pathway">
    <text evidence="1">Cofactor biosynthesis; ubiquinone biosynthesis.</text>
</comment>
<comment type="similarity">
    <text evidence="1">Belongs to the methyltransferase superfamily. UbiG/COQ3 family.</text>
</comment>
<organism>
    <name type="scientific">Chelativorans sp. (strain BNC1)</name>
    <dbReference type="NCBI Taxonomy" id="266779"/>
    <lineage>
        <taxon>Bacteria</taxon>
        <taxon>Pseudomonadati</taxon>
        <taxon>Pseudomonadota</taxon>
        <taxon>Alphaproteobacteria</taxon>
        <taxon>Hyphomicrobiales</taxon>
        <taxon>Phyllobacteriaceae</taxon>
        <taxon>Chelativorans</taxon>
    </lineage>
</organism>
<name>UBIG_CHESB</name>
<protein>
    <recommendedName>
        <fullName evidence="1">Ubiquinone biosynthesis O-methyltransferase</fullName>
    </recommendedName>
    <alternativeName>
        <fullName evidence="1">2-polyprenyl-6-hydroxyphenol methylase</fullName>
        <ecNumber evidence="1">2.1.1.222</ecNumber>
    </alternativeName>
    <alternativeName>
        <fullName evidence="1">3-demethylubiquinone 3-O-methyltransferase</fullName>
        <ecNumber evidence="1">2.1.1.64</ecNumber>
    </alternativeName>
</protein>
<gene>
    <name evidence="1" type="primary">ubiG</name>
    <name type="ordered locus">Meso_3002</name>
</gene>